<comment type="function">
    <text evidence="1">Self assembles to form a helical capsid wrapping up the viral genomic DNA. The capsid displays a filamentous structure with a length of 760-1950 nm and a width of 6-8 nm. The virion assembly and budding take place at the host inner membrane (By similarity).</text>
</comment>
<comment type="subunit">
    <text evidence="1">Homomultimerizes. There are several thousands of this protein in the phage capsid (By similarity).</text>
</comment>
<comment type="subcellular location">
    <subcellularLocation>
        <location evidence="4">Virion</location>
    </subcellularLocation>
    <subcellularLocation>
        <location>Host membrane</location>
        <topology>Single-pass type I membrane protein</topology>
    </subcellularLocation>
    <text evidence="1">prior to assembly, the major capsid protein is found associated with the bacterial host inner membrane.</text>
</comment>
<comment type="similarity">
    <text evidence="4">Belongs to the inovirus capsid protein family.</text>
</comment>
<name>CAPSD_BPIKE</name>
<dbReference type="EMBL" id="X02139">
    <property type="protein sequence ID" value="CAA26072.1"/>
    <property type="molecule type" value="Genomic_DNA"/>
</dbReference>
<dbReference type="PIR" id="A92912">
    <property type="entry name" value="VCBPIK"/>
</dbReference>
<dbReference type="RefSeq" id="NP_040575.1">
    <property type="nucleotide sequence ID" value="NC_002014.1"/>
</dbReference>
<dbReference type="PDB" id="1IFL">
    <property type="method" value="Fiber"/>
    <property type="resolution" value="5.00 A"/>
    <property type="chains" value="A=30-82"/>
</dbReference>
<dbReference type="PDB" id="6A7F">
    <property type="method" value="EM"/>
    <property type="resolution" value="3.40 A"/>
    <property type="chains" value="A/B/C/D/E/F/G/H/I/J/K/L/M/N/O/P/Q/R/S/T/U/V/W/X/Y/Z/a/b/c/d=30-82"/>
</dbReference>
<dbReference type="PDBsum" id="1IFL"/>
<dbReference type="PDBsum" id="6A7F"/>
<dbReference type="EMDB" id="EMD-6993"/>
<dbReference type="SMR" id="P03620"/>
<dbReference type="GeneID" id="1260888"/>
<dbReference type="KEGG" id="vg:1260888"/>
<dbReference type="OrthoDB" id="38091at10239"/>
<dbReference type="EvolutionaryTrace" id="P03620"/>
<dbReference type="Proteomes" id="UP000000372">
    <property type="component" value="Genome"/>
</dbReference>
<dbReference type="GO" id="GO:0019029">
    <property type="term" value="C:helical viral capsid"/>
    <property type="evidence" value="ECO:0007669"/>
    <property type="project" value="UniProtKB-KW"/>
</dbReference>
<dbReference type="GO" id="GO:0033644">
    <property type="term" value="C:host cell membrane"/>
    <property type="evidence" value="ECO:0007669"/>
    <property type="project" value="UniProtKB-SubCell"/>
</dbReference>
<dbReference type="GO" id="GO:0016020">
    <property type="term" value="C:membrane"/>
    <property type="evidence" value="ECO:0007669"/>
    <property type="project" value="UniProtKB-KW"/>
</dbReference>
<dbReference type="Gene3D" id="1.20.5.80">
    <property type="match status" value="1"/>
</dbReference>
<dbReference type="InterPro" id="IPR008020">
    <property type="entry name" value="G8P"/>
</dbReference>
<dbReference type="InterPro" id="IPR023390">
    <property type="entry name" value="Phage_M13_G8P_capsid_dom_sf"/>
</dbReference>
<dbReference type="Pfam" id="PF19199">
    <property type="entry name" value="Phage_coatGP8"/>
    <property type="match status" value="1"/>
</dbReference>
<dbReference type="PIRSF" id="PIRSF004117">
    <property type="entry name" value="Phage_coat_B"/>
    <property type="match status" value="1"/>
</dbReference>
<dbReference type="SUPFAM" id="SSF57987">
    <property type="entry name" value="Inovirus (filamentous phage) major coat protein"/>
    <property type="match status" value="1"/>
</dbReference>
<accession>P03620</accession>
<reference key="1">
    <citation type="journal article" date="1985" name="J. Mol. Biol.">
        <title>Nucleotide sequence and genetic organization of the genome of the N-specific filamentous bacteriophage IKe. Comparison with the genome of the F-specific filamentous phages M13, fd and f1.</title>
        <authorList>
            <person name="Peeters B.P.H."/>
            <person name="Peters R.M."/>
            <person name="Schoenmakers J.G.G."/>
            <person name="Konings R.N.H."/>
        </authorList>
    </citation>
    <scope>NUCLEOTIDE SEQUENCE [GENOMIC DNA]</scope>
</reference>
<reference key="2">
    <citation type="journal article" date="1981" name="J. Biol. Chem.">
        <title>Primary structure of the major coat protein of the filamentous bacterial viruses, If1 and Ike.</title>
        <authorList>
            <person name="Nakashima Y."/>
            <person name="Frangione B."/>
            <person name="Wiseman R.L."/>
            <person name="Konigsberg W.H."/>
        </authorList>
    </citation>
    <scope>PROTEIN SEQUENCE OF 30-82</scope>
</reference>
<reference key="3">
    <citation type="journal article" date="1994" name="J. Mol. Biol.">
        <title>Molecular models and structural comparisons of native and mutant class I filamentous bacteriophages Ff (fd, f1, M13), If1 and IKe.</title>
        <authorList>
            <person name="Marvin D.A."/>
            <person name="Hale R.D."/>
            <person name="Nave C."/>
            <person name="Citterich M.H."/>
        </authorList>
    </citation>
    <scope>X-RAY CRYSTALLOGRAPHY (5.0 ANGSTROMS)</scope>
</reference>
<proteinExistence type="evidence at protein level"/>
<protein>
    <recommendedName>
        <fullName>Capsid protein G8P</fullName>
    </recommendedName>
    <alternativeName>
        <fullName>Coat protein B</fullName>
    </alternativeName>
    <alternativeName>
        <fullName>Gene 8 protein</fullName>
        <shortName>G8P</shortName>
    </alternativeName>
    <alternativeName>
        <fullName>Major coat protein</fullName>
    </alternativeName>
</protein>
<sequence>MRVLSTVLAAKNKIALGAATMLVSAGSFAAEPNAATNYATEAMDSLKTQAIDLISQTWPVVTTVVVAGLVIRLFKKFSSKAV</sequence>
<feature type="signal peptide" evidence="3">
    <location>
        <begin position="1"/>
        <end position="29"/>
    </location>
</feature>
<feature type="chain" id="PRO_0000003301" description="Capsid protein G8P">
    <location>
        <begin position="30"/>
        <end position="82"/>
    </location>
</feature>
<feature type="topological domain" description="Periplasmic">
    <location>
        <begin position="30"/>
        <end position="54"/>
    </location>
</feature>
<feature type="transmembrane region" description="Helical" evidence="2">
    <location>
        <begin position="55"/>
        <end position="74"/>
    </location>
</feature>
<feature type="topological domain" description="Cytoplasmic">
    <location>
        <begin position="75"/>
        <end position="82"/>
    </location>
</feature>
<feature type="helix" evidence="5">
    <location>
        <begin position="39"/>
        <end position="81"/>
    </location>
</feature>
<evidence type="ECO:0000250" key="1"/>
<evidence type="ECO:0000255" key="2"/>
<evidence type="ECO:0000269" key="3">
    <source>
    </source>
</evidence>
<evidence type="ECO:0000305" key="4"/>
<evidence type="ECO:0007829" key="5">
    <source>
        <dbReference type="PDB" id="6A7F"/>
    </source>
</evidence>
<organism>
    <name type="scientific">Salmonella phage IKe</name>
    <name type="common">Bacteriophage IKe</name>
    <dbReference type="NCBI Taxonomy" id="10867"/>
    <lineage>
        <taxon>Viruses</taxon>
        <taxon>Monodnaviria</taxon>
        <taxon>Loebvirae</taxon>
        <taxon>Hofneiviricota</taxon>
        <taxon>Faserviricetes</taxon>
        <taxon>Tubulavirales</taxon>
        <taxon>Inoviridae</taxon>
        <taxon>Lineavirus</taxon>
        <taxon>Lineavirus IKe</taxon>
    </lineage>
</organism>
<gene>
    <name type="primary">VIII</name>
</gene>
<organismHost>
    <name type="scientific">Escherichia coli</name>
    <dbReference type="NCBI Taxonomy" id="562"/>
</organismHost>
<keyword id="KW-0002">3D-structure</keyword>
<keyword id="KW-0167">Capsid protein</keyword>
<keyword id="KW-0903">Direct protein sequencing</keyword>
<keyword id="KW-1139">Helical capsid protein</keyword>
<keyword id="KW-1043">Host membrane</keyword>
<keyword id="KW-0472">Membrane</keyword>
<keyword id="KW-1185">Reference proteome</keyword>
<keyword id="KW-0732">Signal</keyword>
<keyword id="KW-0812">Transmembrane</keyword>
<keyword id="KW-1133">Transmembrane helix</keyword>
<keyword id="KW-0946">Virion</keyword>